<keyword id="KW-0256">Endoplasmic reticulum</keyword>
<keyword id="KW-0472">Membrane</keyword>
<keyword id="KW-1185">Reference proteome</keyword>
<keyword id="KW-0812">Transmembrane</keyword>
<keyword id="KW-1133">Transmembrane helix</keyword>
<accession>Q6GR43</accession>
<protein>
    <recommendedName>
        <fullName>ER membrane protein complex subunit 4</fullName>
    </recommendedName>
    <alternativeName>
        <fullName>Transmembrane protein 85</fullName>
    </alternativeName>
</protein>
<reference key="1">
    <citation type="submission" date="2004-05" db="EMBL/GenBank/DDBJ databases">
        <authorList>
            <consortium name="NIH - Xenopus Gene Collection (XGC) project"/>
        </authorList>
    </citation>
    <scope>NUCLEOTIDE SEQUENCE [LARGE SCALE MRNA]</scope>
    <source>
        <tissue>Ovary</tissue>
    </source>
</reference>
<comment type="function">
    <text evidence="1">Part of the endoplasmic reticulum membrane protein complex (EMC) that enables the energy-independent insertion into endoplasmic reticulum membranes of newly synthesized membrane proteins. Preferentially accommodates proteins with transmembrane domains that are weakly hydrophobic or contain destabilizing features such as charged and aromatic residues. Involved in the cotranslational insertion of multi-pass membrane proteins in which stop-transfer membrane-anchor sequences become ER membrane spanning helices. It is also required for the post-translational insertion of tail-anchored/TA proteins in endoplasmic reticulum membranes. By mediating the proper cotranslational insertion of N-terminal transmembrane domains in an N-exo topology, with translocated N-terminus in the lumen of the ER, controls the topology of multi-pass membrane proteins like the G protein-coupled receptors. By regulating the insertion of various proteins in membranes, it is indirectly involved in many cellular processes.</text>
</comment>
<comment type="subunit">
    <text evidence="1">Component of the ER membrane protein complex (EMC).</text>
</comment>
<comment type="subcellular location">
    <subcellularLocation>
        <location evidence="1">Endoplasmic reticulum membrane</location>
        <topology evidence="1">Multi-pass membrane protein</topology>
    </subcellularLocation>
</comment>
<comment type="similarity">
    <text evidence="2">Belongs to the EMC4 family.</text>
</comment>
<dbReference type="EMBL" id="BC071090">
    <property type="protein sequence ID" value="AAH71090.1"/>
    <property type="molecule type" value="mRNA"/>
</dbReference>
<dbReference type="RefSeq" id="NP_001093333.1">
    <property type="nucleotide sequence ID" value="NM_001099863.1"/>
</dbReference>
<dbReference type="SMR" id="Q6GR43"/>
<dbReference type="DNASU" id="100101270"/>
<dbReference type="GeneID" id="100101270"/>
<dbReference type="KEGG" id="xla:100101270"/>
<dbReference type="AGR" id="Xenbase:XB-GENE-965552"/>
<dbReference type="CTD" id="100101270"/>
<dbReference type="Xenbase" id="XB-GENE-965552">
    <property type="gene designation" value="emc4.L"/>
</dbReference>
<dbReference type="OMA" id="QQTFKVI"/>
<dbReference type="OrthoDB" id="369569at2759"/>
<dbReference type="Proteomes" id="UP000186698">
    <property type="component" value="Chromosome 1L"/>
</dbReference>
<dbReference type="Bgee" id="100101270">
    <property type="expression patterns" value="Expressed in internal ear and 19 other cell types or tissues"/>
</dbReference>
<dbReference type="GO" id="GO:0072546">
    <property type="term" value="C:EMC complex"/>
    <property type="evidence" value="ECO:0000250"/>
    <property type="project" value="UniProtKB"/>
</dbReference>
<dbReference type="GO" id="GO:0005789">
    <property type="term" value="C:endoplasmic reticulum membrane"/>
    <property type="evidence" value="ECO:0000250"/>
    <property type="project" value="UniProtKB"/>
</dbReference>
<dbReference type="GO" id="GO:0016020">
    <property type="term" value="C:membrane"/>
    <property type="evidence" value="ECO:0000250"/>
    <property type="project" value="UniProtKB"/>
</dbReference>
<dbReference type="GO" id="GO:0045050">
    <property type="term" value="P:protein insertion into ER membrane by stop-transfer membrane-anchor sequence"/>
    <property type="evidence" value="ECO:0000250"/>
    <property type="project" value="UniProtKB"/>
</dbReference>
<dbReference type="GO" id="GO:0071816">
    <property type="term" value="P:tail-anchored membrane protein insertion into ER membrane"/>
    <property type="evidence" value="ECO:0000250"/>
    <property type="project" value="UniProtKB"/>
</dbReference>
<dbReference type="InterPro" id="IPR009445">
    <property type="entry name" value="TMEM85/Emc4"/>
</dbReference>
<dbReference type="PANTHER" id="PTHR19315">
    <property type="entry name" value="ER MEMBRANE PROTEIN COMPLEX SUBUNIT 4"/>
    <property type="match status" value="1"/>
</dbReference>
<dbReference type="Pfam" id="PF06417">
    <property type="entry name" value="EMC4"/>
    <property type="match status" value="1"/>
</dbReference>
<organism>
    <name type="scientific">Xenopus laevis</name>
    <name type="common">African clawed frog</name>
    <dbReference type="NCBI Taxonomy" id="8355"/>
    <lineage>
        <taxon>Eukaryota</taxon>
        <taxon>Metazoa</taxon>
        <taxon>Chordata</taxon>
        <taxon>Craniata</taxon>
        <taxon>Vertebrata</taxon>
        <taxon>Euteleostomi</taxon>
        <taxon>Amphibia</taxon>
        <taxon>Batrachia</taxon>
        <taxon>Anura</taxon>
        <taxon>Pipoidea</taxon>
        <taxon>Pipidae</taxon>
        <taxon>Xenopodinae</taxon>
        <taxon>Xenopus</taxon>
        <taxon>Xenopus</taxon>
    </lineage>
</organism>
<sequence length="180" mass="19982">MATPTNLVTNRGRRFKWAIEFGSGGSRGRGERGGLQDSMYPVGYSDKQVPDTSVQESDHILVEKRCWDIALGPLKQIPMNLFIMYMAGNTISIFPIMMVCMMAWRPIQALLATPATFKLLESSGQRFLQGLVYLIGNLLGLALGVYKCQSMGLLPTHASDWLAFIEPPERMEYTGGGFLL</sequence>
<evidence type="ECO:0000250" key="1">
    <source>
        <dbReference type="UniProtKB" id="Q5J8M3"/>
    </source>
</evidence>
<evidence type="ECO:0000305" key="2"/>
<name>EMC4_XENLA</name>
<feature type="chain" id="PRO_0000251917" description="ER membrane protein complex subunit 4">
    <location>
        <begin position="1"/>
        <end position="180"/>
    </location>
</feature>
<feature type="topological domain" description="Cytoplasmic" evidence="1">
    <location>
        <begin position="1"/>
        <end position="63"/>
    </location>
</feature>
<feature type="transmembrane region" description="Helical" evidence="1">
    <location>
        <begin position="64"/>
        <end position="84"/>
    </location>
</feature>
<feature type="topological domain" description="Lumenal" evidence="1">
    <location>
        <begin position="85"/>
        <end position="95"/>
    </location>
</feature>
<feature type="transmembrane region" description="Helical" evidence="1">
    <location>
        <begin position="96"/>
        <end position="117"/>
    </location>
</feature>
<feature type="topological domain" description="Cytoplasmic" evidence="1">
    <location>
        <begin position="118"/>
        <end position="124"/>
    </location>
</feature>
<feature type="transmembrane region" description="Helical" evidence="1">
    <location>
        <begin position="125"/>
        <end position="145"/>
    </location>
</feature>
<feature type="topological domain" description="Lumenal" evidence="1">
    <location>
        <begin position="146"/>
        <end position="180"/>
    </location>
</feature>
<gene>
    <name type="primary">emc4</name>
    <name type="synonym">tmem85</name>
</gene>
<proteinExistence type="evidence at transcript level"/>